<reference key="1">
    <citation type="journal article" date="2004" name="J. Bacteriol.">
        <title>Differential regulation of the PanA and PanB proteasome-activating nucleotidase and 20S proteasomal proteins of the haloarchaeon Haloferax volcanii.</title>
        <authorList>
            <person name="Reuter C.J."/>
            <person name="Kaczowka S.J."/>
            <person name="Maupin-Furlow J.A."/>
        </authorList>
    </citation>
    <scope>NUCLEOTIDE SEQUENCE [GENOMIC DNA]</scope>
    <scope>INDUCTION</scope>
</reference>
<reference key="2">
    <citation type="journal article" date="2010" name="PLoS ONE">
        <title>The complete genome sequence of Haloferax volcanii DS2, a model archaeon.</title>
        <authorList>
            <person name="Hartman A.L."/>
            <person name="Norais C."/>
            <person name="Badger J.H."/>
            <person name="Delmas S."/>
            <person name="Haldenby S."/>
            <person name="Madupu R."/>
            <person name="Robinson J."/>
            <person name="Khouri H."/>
            <person name="Ren Q."/>
            <person name="Lowe T.M."/>
            <person name="Maupin-Furlow J."/>
            <person name="Pohlschroder M."/>
            <person name="Daniels C."/>
            <person name="Pfeiffer F."/>
            <person name="Allers T."/>
            <person name="Eisen J.A."/>
        </authorList>
    </citation>
    <scope>NUCLEOTIDE SEQUENCE [LARGE SCALE GENOMIC DNA]</scope>
    <source>
        <strain>ATCC 29605 / DSM 3757 / JCM 8879 / NBRC 14742 / NCIMB 2012 / VKM B-1768 / DS2</strain>
    </source>
</reference>
<reference key="3">
    <citation type="journal article" date="2008" name="J. Bacteriol.">
        <title>Proteasomal components required for cell growth and stress responses in the haloarchaeon Haloferax volcanii.</title>
        <authorList>
            <person name="Zhou G."/>
            <person name="Kowalczyk D."/>
            <person name="Humbard M.A."/>
            <person name="Rohatgi S."/>
            <person name="Maupin-Furlow J.A."/>
        </authorList>
    </citation>
    <scope>DISRUPTION PHENOTYPE</scope>
</reference>
<reference key="4">
    <citation type="journal article" date="2014" name="Extremophiles">
        <title>Structural and biochemical properties of an extreme 'salt-loving' proteasome activating nucleotidase from the archaeon Haloferax volcanii.</title>
        <authorList>
            <person name="Prunetti L."/>
            <person name="Reuter C.J."/>
            <person name="Hepowit N.L."/>
            <person name="Wu Y."/>
            <person name="Barrueto L."/>
            <person name="Miranda H.V."/>
            <person name="Kelly K."/>
            <person name="Maupin-Furlow J.A."/>
        </authorList>
    </citation>
    <scope>FUNCTION</scope>
    <scope>ATPASE ACTIVITY</scope>
    <scope>NUCLEOTIDE SPECIFICITY</scope>
    <scope>BIOPHYSICOCHEMICAL PROPERTIES</scope>
    <scope>ACTIVITY REGULATION</scope>
    <scope>SUBUNIT</scope>
    <scope>INTERACTION WITH SAMPYLATED PROTEINS</scope>
    <source>
        <strain>DS2 / DS70</strain>
    </source>
</reference>
<reference key="5">
    <citation type="journal article" date="2014" name="PLoS ONE">
        <title>Archaeal Tuc1/Ncs6 homolog required for wobble uridine tRNA thiolation is associated with ubiquitin-proteasome, translation, and RNA processing system homologs.</title>
        <authorList>
            <person name="Chavarria N.E."/>
            <person name="Hwang S."/>
            <person name="Cao S."/>
            <person name="Fu X."/>
            <person name="Holman M."/>
            <person name="Elbanna D."/>
            <person name="Rodriguez S."/>
            <person name="Arrington D."/>
            <person name="Englert M."/>
            <person name="Uthandi S."/>
            <person name="Soell D."/>
            <person name="Maupin-Furlow J.A."/>
        </authorList>
    </citation>
    <scope>INTERACTION WITH NCSA</scope>
    <source>
        <strain evidence="6">DS2 / DS70</strain>
    </source>
</reference>
<dbReference type="EMBL" id="AY627303">
    <property type="protein sequence ID" value="AAV38126.1"/>
    <property type="molecule type" value="Genomic_DNA"/>
</dbReference>
<dbReference type="EMBL" id="CP001956">
    <property type="protein sequence ID" value="ADE04646.1"/>
    <property type="status" value="ALT_INIT"/>
    <property type="molecule type" value="Genomic_DNA"/>
</dbReference>
<dbReference type="RefSeq" id="WP_004064311.1">
    <property type="nucleotide sequence ID" value="NC_013967.1"/>
</dbReference>
<dbReference type="SMR" id="D4GUJ7"/>
<dbReference type="STRING" id="309800.HVO_0850"/>
<dbReference type="PaxDb" id="309800-C498_14488"/>
<dbReference type="EnsemblBacteria" id="ADE04646">
    <property type="protein sequence ID" value="ADE04646"/>
    <property type="gene ID" value="HVO_0850"/>
</dbReference>
<dbReference type="GeneID" id="8923954"/>
<dbReference type="KEGG" id="hvo:HVO_0850"/>
<dbReference type="eggNOG" id="arCOG01306">
    <property type="taxonomic scope" value="Archaea"/>
</dbReference>
<dbReference type="HOGENOM" id="CLU_000688_2_0_2"/>
<dbReference type="OrthoDB" id="77269at2157"/>
<dbReference type="BRENDA" id="5.6.1.5">
    <property type="organism ID" value="2561"/>
</dbReference>
<dbReference type="Proteomes" id="UP000008243">
    <property type="component" value="Chromosome"/>
</dbReference>
<dbReference type="GO" id="GO:0005737">
    <property type="term" value="C:cytoplasm"/>
    <property type="evidence" value="ECO:0007669"/>
    <property type="project" value="UniProtKB-SubCell"/>
</dbReference>
<dbReference type="GO" id="GO:0022623">
    <property type="term" value="C:proteasome-activating nucleotidase complex"/>
    <property type="evidence" value="ECO:0007669"/>
    <property type="project" value="UniProtKB-UniRule"/>
</dbReference>
<dbReference type="GO" id="GO:0005524">
    <property type="term" value="F:ATP binding"/>
    <property type="evidence" value="ECO:0007669"/>
    <property type="project" value="UniProtKB-UniRule"/>
</dbReference>
<dbReference type="GO" id="GO:0016887">
    <property type="term" value="F:ATP hydrolysis activity"/>
    <property type="evidence" value="ECO:0007669"/>
    <property type="project" value="UniProtKB-UniRule"/>
</dbReference>
<dbReference type="GO" id="GO:0010498">
    <property type="term" value="P:proteasomal protein catabolic process"/>
    <property type="evidence" value="ECO:0007669"/>
    <property type="project" value="UniProtKB-UniRule"/>
</dbReference>
<dbReference type="GO" id="GO:0043335">
    <property type="term" value="P:protein unfolding"/>
    <property type="evidence" value="ECO:0007669"/>
    <property type="project" value="UniProtKB-UniRule"/>
</dbReference>
<dbReference type="CDD" id="cd19502">
    <property type="entry name" value="RecA-like_PAN_like"/>
    <property type="match status" value="1"/>
</dbReference>
<dbReference type="FunFam" id="3.40.50.300:FF:000033">
    <property type="entry name" value="26S protease regulatory subunit 6B"/>
    <property type="match status" value="1"/>
</dbReference>
<dbReference type="FunFam" id="1.10.8.60:FF:000006">
    <property type="entry name" value="26S protease regulatory subunit 8"/>
    <property type="match status" value="1"/>
</dbReference>
<dbReference type="Gene3D" id="1.10.8.60">
    <property type="match status" value="1"/>
</dbReference>
<dbReference type="Gene3D" id="2.40.50.140">
    <property type="entry name" value="Nucleic acid-binding proteins"/>
    <property type="match status" value="1"/>
</dbReference>
<dbReference type="Gene3D" id="3.40.50.300">
    <property type="entry name" value="P-loop containing nucleotide triphosphate hydrolases"/>
    <property type="match status" value="1"/>
</dbReference>
<dbReference type="HAMAP" id="MF_00553">
    <property type="entry name" value="PAN"/>
    <property type="match status" value="1"/>
</dbReference>
<dbReference type="InterPro" id="IPR050221">
    <property type="entry name" value="26S_Proteasome_ATPase"/>
</dbReference>
<dbReference type="InterPro" id="IPR003593">
    <property type="entry name" value="AAA+_ATPase"/>
</dbReference>
<dbReference type="InterPro" id="IPR041569">
    <property type="entry name" value="AAA_lid_3"/>
</dbReference>
<dbReference type="InterPro" id="IPR003959">
    <property type="entry name" value="ATPase_AAA_core"/>
</dbReference>
<dbReference type="InterPro" id="IPR003960">
    <property type="entry name" value="ATPase_AAA_CS"/>
</dbReference>
<dbReference type="InterPro" id="IPR012340">
    <property type="entry name" value="NA-bd_OB-fold"/>
</dbReference>
<dbReference type="InterPro" id="IPR023501">
    <property type="entry name" value="Nucleotidase_PAN"/>
</dbReference>
<dbReference type="InterPro" id="IPR027417">
    <property type="entry name" value="P-loop_NTPase"/>
</dbReference>
<dbReference type="NCBIfam" id="NF003069">
    <property type="entry name" value="PRK03992.1"/>
    <property type="match status" value="1"/>
</dbReference>
<dbReference type="NCBIfam" id="TIGR01242">
    <property type="entry name" value="proteasome-activating nucleotidase"/>
    <property type="match status" value="1"/>
</dbReference>
<dbReference type="NCBIfam" id="NF047748">
    <property type="entry name" value="PrtsmActNtasePan1"/>
    <property type="match status" value="1"/>
</dbReference>
<dbReference type="PANTHER" id="PTHR23073">
    <property type="entry name" value="26S PROTEASOME REGULATORY SUBUNIT"/>
    <property type="match status" value="1"/>
</dbReference>
<dbReference type="Pfam" id="PF00004">
    <property type="entry name" value="AAA"/>
    <property type="match status" value="1"/>
</dbReference>
<dbReference type="Pfam" id="PF17862">
    <property type="entry name" value="AAA_lid_3"/>
    <property type="match status" value="1"/>
</dbReference>
<dbReference type="SMART" id="SM00382">
    <property type="entry name" value="AAA"/>
    <property type="match status" value="1"/>
</dbReference>
<dbReference type="SUPFAM" id="SSF52540">
    <property type="entry name" value="P-loop containing nucleoside triphosphate hydrolases"/>
    <property type="match status" value="1"/>
</dbReference>
<dbReference type="PROSITE" id="PS00674">
    <property type="entry name" value="AAA"/>
    <property type="match status" value="1"/>
</dbReference>
<sequence length="406" mass="45802">MMTDTVDDVDLPYDKDSASQQEKITALQERLEVLETQNEEMRDKLLDTNAENNKYQQKLERLTHENKKLKQSPLFVATVQEITDEGVIIKQHGNNQEALTEVTDEMREELEPDARVAVNNSLSIVKRLDKETDVRARVMQVEHSPDVTYEDIGGLEEQMQEVRETVEMPLDRPEMFAEVGIDPPSGVLLYGPPGTGKTMLAKAVANQTNASFIKMAGSELVHKFIGEGAKLVRDLFEVARENEPAVIFIDEIDAIASKRTDSKTSGDAEVQRTMMQLLAEMDGFDERGNIRIIAATNRFDMLDPAILRPGRFDRLIEVPKPNEDGREIIFQIHTRKMNVSDDVDFVELAEMADNASGADIKAVCTEAGMFAIRDDRTEIFMQDFVDAWEKIQQEASDETEVSRAFA</sequence>
<proteinExistence type="evidence at protein level"/>
<comment type="function">
    <text evidence="4 7">ATPase which is responsible for recognizing, binding, unfolding and translocation of substrate proteins into the archaeal 20S proteasome core particle. Is essential for opening the gate of the 20S proteasome via an interaction with its C-terminus, thereby allowing substrate entry and access to the site of proteolysis. Thus, the C-terminus of the proteasomal ATPase functions like a 'key in a lock' to induce gate opening and therefore regulate proteolysis. Unfolding activity requires energy from ATP hydrolysis, whereas ATP binding alone promotes ATPase-20S proteasome association which triggers gate opening, and supports translocation of unfolded substrates (Probable). Is also able to cleave other nucleoside triphosphates including GTP and TTP, but the rate of hydrolysis is 4- to 5-fold slower than for ATP.</text>
</comment>
<comment type="activity regulation">
    <text evidence="4">ATPase activity is inhibited by EDTA in vitro.</text>
</comment>
<comment type="biophysicochemical properties">
    <kinetics>
        <KM evidence="4">438 uM for ATP (at 42 degrees Celsius, pH 8 and 2 M NaCl)</KM>
        <Vmax evidence="4">471.0 nmol/h/mg enzyme for ATPase activity (at 42 degrees Celsius, pH 8 and 2 M NaCl)</Vmax>
    </kinetics>
    <temperatureDependence>
        <text evidence="4">Optimum temperature is 42 degrees Celsius. ATPase activity is 1.5-fold decreased at 25 degrees Celsius and 37 degrees Celsius, 4.7-fold at 20 degrees Celsius. The protein is not active at 50 degrees Celsius.</text>
    </temperatureDependence>
</comment>
<comment type="subunit">
    <text evidence="4 5">Homododecamer, in a proposed two stacked hexameric ring configuration, but may also form homohexamer. The hexameric complex has likely a two-ring architecture resembling a top hat that caps the 20S proteasome core at one or both ends. Upon ATP-binding, the C-terminus of PAN probably interacts with the alpha-rings of the proteasome core by binding to the intersubunit pockets. Interacts with SAMP1-MoaE conjugate in vitro, but does not bind to SAMP1 or MoaE alone (PubMed:24343376). Interacts with NcsA (PubMed:24906001).</text>
</comment>
<comment type="subcellular location">
    <subcellularLocation>
        <location evidence="1">Cytoplasm</location>
    </subcellularLocation>
</comment>
<comment type="induction">
    <text evidence="2">Up-regulated at the mRNA level during transition from exponential to stationary phase. However, at the protein level, PanA is expressed at a high and relatively constant level throughout growth.</text>
</comment>
<comment type="domain">
    <text evidence="1">Consists of three main regions, an N-terminal coiled-coil domain that may assist in substrate recognition, an interdomain involved in PAN hexamerization, and a C-terminal ATPase domain of the AAA type.</text>
</comment>
<comment type="disruption phenotype">
    <text evidence="3">Strains lacking panA gene alone display relatively normal growth rate and overall cell yield, but they are more sensitive to growth on organic versus inorganic nitrogen sources and hypo-osmotic stress, they show limited growth in the presence of L-canavanine and display enhanced thermotolerance. Moreover, strains lackings both panA and panB still show robust growth, demonstrating that the PAN proteins are not essential.</text>
</comment>
<comment type="miscellaneous">
    <text>The biochemical properties of PAN 1 are highly dependent on molar concentrations of salt with a significant loss of ATPase activity and complex dissociation detected at 0.75 M NaCl.</text>
</comment>
<comment type="similarity">
    <text evidence="1">Belongs to the AAA ATPase family.</text>
</comment>
<comment type="sequence caution" evidence="7">
    <conflict type="erroneous initiation">
        <sequence resource="EMBL-CDS" id="ADE04646"/>
    </conflict>
    <text>Truncated N-terminus.</text>
</comment>
<accession>D4GUJ7</accession>
<accession>Q5UT57</accession>
<protein>
    <recommendedName>
        <fullName evidence="1">Proteasome-activating nucleotidase 1</fullName>
        <shortName evidence="1">PAN 1</shortName>
    </recommendedName>
    <alternativeName>
        <fullName evidence="1">Proteasomal ATPase 1</fullName>
    </alternativeName>
    <alternativeName>
        <fullName evidence="1">Proteasome regulatory ATPase 1</fullName>
    </alternativeName>
    <alternativeName>
        <fullName evidence="1">Proteasome regulatory particle 1</fullName>
    </alternativeName>
</protein>
<organism>
    <name type="scientific">Haloferax volcanii (strain ATCC 29605 / DSM 3757 / JCM 8879 / NBRC 14742 / NCIMB 2012 / VKM B-1768 / DS2)</name>
    <name type="common">Halobacterium volcanii</name>
    <dbReference type="NCBI Taxonomy" id="309800"/>
    <lineage>
        <taxon>Archaea</taxon>
        <taxon>Methanobacteriati</taxon>
        <taxon>Methanobacteriota</taxon>
        <taxon>Stenosarchaea group</taxon>
        <taxon>Halobacteria</taxon>
        <taxon>Halobacteriales</taxon>
        <taxon>Haloferacaceae</taxon>
        <taxon>Haloferax</taxon>
    </lineage>
</organism>
<feature type="chain" id="PRO_0000397030" description="Proteasome-activating nucleotidase 1">
    <location>
        <begin position="1"/>
        <end position="406"/>
    </location>
</feature>
<feature type="region of interest" description="Docks into pockets in the proteasome alpha-ring to cause gate opening" evidence="1">
    <location>
        <begin position="404"/>
        <end position="406"/>
    </location>
</feature>
<feature type="coiled-coil region" evidence="1">
    <location>
        <begin position="13"/>
        <end position="72"/>
    </location>
</feature>
<feature type="binding site" evidence="1">
    <location>
        <begin position="194"/>
        <end position="199"/>
    </location>
    <ligand>
        <name>ATP</name>
        <dbReference type="ChEBI" id="CHEBI:30616"/>
    </ligand>
</feature>
<feature type="binding site" evidence="1">
    <location>
        <position position="333"/>
    </location>
    <ligand>
        <name>ATP</name>
        <dbReference type="ChEBI" id="CHEBI:30616"/>
    </ligand>
</feature>
<name>PAN1_HALVD</name>
<gene>
    <name evidence="1" type="primary">pan1</name>
    <name type="synonym">panA</name>
    <name type="ordered locus">HVO_0850</name>
</gene>
<keyword id="KW-0067">ATP-binding</keyword>
<keyword id="KW-0143">Chaperone</keyword>
<keyword id="KW-0175">Coiled coil</keyword>
<keyword id="KW-0963">Cytoplasm</keyword>
<keyword id="KW-0547">Nucleotide-binding</keyword>
<keyword id="KW-0647">Proteasome</keyword>
<keyword id="KW-1185">Reference proteome</keyword>
<evidence type="ECO:0000255" key="1">
    <source>
        <dbReference type="HAMAP-Rule" id="MF_00553"/>
    </source>
</evidence>
<evidence type="ECO:0000269" key="2">
    <source>
    </source>
</evidence>
<evidence type="ECO:0000269" key="3">
    <source>
    </source>
</evidence>
<evidence type="ECO:0000269" key="4">
    <source>
    </source>
</evidence>
<evidence type="ECO:0000269" key="5">
    <source>
    </source>
</evidence>
<evidence type="ECO:0000303" key="6">
    <source>
    </source>
</evidence>
<evidence type="ECO:0000305" key="7"/>